<keyword id="KW-1185">Reference proteome</keyword>
<name>Y877_MYCTO</name>
<proteinExistence type="predicted"/>
<protein>
    <recommendedName>
        <fullName>Uncharacterized protein MT0900</fullName>
    </recommendedName>
</protein>
<accession>P9WKR2</accession>
<accession>L0T515</accession>
<accession>P64733</accession>
<accession>Q10539</accession>
<feature type="chain" id="PRO_0000427609" description="Uncharacterized protein MT0900">
    <location>
        <begin position="1"/>
        <end position="262"/>
    </location>
</feature>
<sequence>MTGPTEESAVATVADWPEGLAAVLRGAADQARAAVVEFSGPEAVGDYLGVSYEDGNAATHRFIAHLPGYQGWQWAVVVASYSGADHATISEVVLVPGPTALLAPDWVPWEQRVRPGDLSPGDLLAPAKDDPRLVPGYTASGDAQVDETAAEIGLGRRWVMSAWGRAQSAQRWHDGDYGPGSAMARSTKRVCRDCGFFLPLAGSLGAMFGVCGNELSADGHVVDRQYGCGAHSDTTAPAGGSTPIYEPYDDGVLDIIEKPAES</sequence>
<gene>
    <name type="ordered locus">MT0900</name>
</gene>
<dbReference type="EMBL" id="AE000516">
    <property type="protein sequence ID" value="AAK45142.1"/>
    <property type="molecule type" value="Genomic_DNA"/>
</dbReference>
<dbReference type="PIR" id="B70780">
    <property type="entry name" value="B70780"/>
</dbReference>
<dbReference type="RefSeq" id="WP_003404596.1">
    <property type="nucleotide sequence ID" value="NZ_KK341227.1"/>
</dbReference>
<dbReference type="KEGG" id="mtc:MT0900"/>
<dbReference type="PATRIC" id="fig|83331.31.peg.966"/>
<dbReference type="HOGENOM" id="CLU_035969_1_1_11"/>
<dbReference type="Proteomes" id="UP000001020">
    <property type="component" value="Chromosome"/>
</dbReference>
<dbReference type="InterPro" id="IPR021391">
    <property type="entry name" value="DUF3027"/>
</dbReference>
<dbReference type="Pfam" id="PF11228">
    <property type="entry name" value="DUF3027"/>
    <property type="match status" value="1"/>
</dbReference>
<organism>
    <name type="scientific">Mycobacterium tuberculosis (strain CDC 1551 / Oshkosh)</name>
    <dbReference type="NCBI Taxonomy" id="83331"/>
    <lineage>
        <taxon>Bacteria</taxon>
        <taxon>Bacillati</taxon>
        <taxon>Actinomycetota</taxon>
        <taxon>Actinomycetes</taxon>
        <taxon>Mycobacteriales</taxon>
        <taxon>Mycobacteriaceae</taxon>
        <taxon>Mycobacterium</taxon>
        <taxon>Mycobacterium tuberculosis complex</taxon>
    </lineage>
</organism>
<reference key="1">
    <citation type="journal article" date="2002" name="J. Bacteriol.">
        <title>Whole-genome comparison of Mycobacterium tuberculosis clinical and laboratory strains.</title>
        <authorList>
            <person name="Fleischmann R.D."/>
            <person name="Alland D."/>
            <person name="Eisen J.A."/>
            <person name="Carpenter L."/>
            <person name="White O."/>
            <person name="Peterson J.D."/>
            <person name="DeBoy R.T."/>
            <person name="Dodson R.J."/>
            <person name="Gwinn M.L."/>
            <person name="Haft D.H."/>
            <person name="Hickey E.K."/>
            <person name="Kolonay J.F."/>
            <person name="Nelson W.C."/>
            <person name="Umayam L.A."/>
            <person name="Ermolaeva M.D."/>
            <person name="Salzberg S.L."/>
            <person name="Delcher A."/>
            <person name="Utterback T.R."/>
            <person name="Weidman J.F."/>
            <person name="Khouri H.M."/>
            <person name="Gill J."/>
            <person name="Mikula A."/>
            <person name="Bishai W."/>
            <person name="Jacobs W.R. Jr."/>
            <person name="Venter J.C."/>
            <person name="Fraser C.M."/>
        </authorList>
    </citation>
    <scope>NUCLEOTIDE SEQUENCE [LARGE SCALE GENOMIC DNA]</scope>
    <source>
        <strain>CDC 1551 / Oshkosh</strain>
    </source>
</reference>